<comment type="catalytic activity">
    <reaction evidence="1">
        <text>(S)-4-hydroxy-2-oxopentanoate = acetaldehyde + pyruvate</text>
        <dbReference type="Rhea" id="RHEA:22624"/>
        <dbReference type="ChEBI" id="CHEBI:15343"/>
        <dbReference type="ChEBI" id="CHEBI:15361"/>
        <dbReference type="ChEBI" id="CHEBI:73143"/>
        <dbReference type="EC" id="4.1.3.39"/>
    </reaction>
</comment>
<comment type="similarity">
    <text evidence="1">Belongs to the 4-hydroxy-2-oxovalerate aldolase family.</text>
</comment>
<sequence length="340" mass="36712">MPFNPGKKLYISDVTLRDGSHAIRHQYSIQNVKDIARALDKARVDSIEVAHGDGLQGSSFNYGFGAHTDLEWIEAVAGEISHAQIATLLLPGIGTIHDLDNAYKAGARIVRVATHCTEADVSRQHIERARELGMDTVGFLMMSHMTTPENLAVEAKKMESYGATTIYVVDSGGALSMDDVRARFRALKAVLDPSTTTGMHAHHNLSLGVANSIVAVEEGCDRIDASLAGMGAGAGNAPLEVFIAAADRMGWDHGTDLYTLMDAADDIVRPLQDRPVRVDRETLALGYAGVYSSFLRHSEVAANKYGIKTVDILVELGKRRMVGGQEDMIVDVALDLLNKA</sequence>
<keyword id="KW-0058">Aromatic hydrocarbons catabolism</keyword>
<keyword id="KW-0456">Lyase</keyword>
<keyword id="KW-0464">Manganese</keyword>
<keyword id="KW-0479">Metal-binding</keyword>
<accession>Q46NW8</accession>
<proteinExistence type="inferred from homology"/>
<reference key="1">
    <citation type="journal article" date="2010" name="PLoS ONE">
        <title>The complete multipartite genome sequence of Cupriavidus necator JMP134, a versatile pollutant degrader.</title>
        <authorList>
            <person name="Lykidis A."/>
            <person name="Perez-Pantoja D."/>
            <person name="Ledger T."/>
            <person name="Mavromatis K."/>
            <person name="Anderson I.J."/>
            <person name="Ivanova N.N."/>
            <person name="Hooper S.D."/>
            <person name="Lapidus A."/>
            <person name="Lucas S."/>
            <person name="Gonzalez B."/>
            <person name="Kyrpides N.C."/>
        </authorList>
    </citation>
    <scope>NUCLEOTIDE SEQUENCE [LARGE SCALE GENOMIC DNA]</scope>
    <source>
        <strain>JMP134 / LMG 1197</strain>
    </source>
</reference>
<protein>
    <recommendedName>
        <fullName evidence="1">4-hydroxy-2-oxovalerate aldolase</fullName>
        <shortName evidence="1">HOA</shortName>
        <ecNumber evidence="1">4.1.3.39</ecNumber>
    </recommendedName>
    <alternativeName>
        <fullName evidence="1">4-hydroxy-2-keto-pentanoic acid aldolase</fullName>
    </alternativeName>
    <alternativeName>
        <fullName evidence="1">4-hydroxy-2-oxopentanoate aldolase</fullName>
    </alternativeName>
</protein>
<gene>
    <name type="ordered locus">Reut_B5823</name>
</gene>
<organism>
    <name type="scientific">Cupriavidus pinatubonensis (strain JMP 134 / LMG 1197)</name>
    <name type="common">Cupriavidus necator (strain JMP 134)</name>
    <dbReference type="NCBI Taxonomy" id="264198"/>
    <lineage>
        <taxon>Bacteria</taxon>
        <taxon>Pseudomonadati</taxon>
        <taxon>Pseudomonadota</taxon>
        <taxon>Betaproteobacteria</taxon>
        <taxon>Burkholderiales</taxon>
        <taxon>Burkholderiaceae</taxon>
        <taxon>Cupriavidus</taxon>
    </lineage>
</organism>
<evidence type="ECO:0000255" key="1">
    <source>
        <dbReference type="HAMAP-Rule" id="MF_01656"/>
    </source>
</evidence>
<feature type="chain" id="PRO_0000387888" description="4-hydroxy-2-oxovalerate aldolase">
    <location>
        <begin position="1"/>
        <end position="340"/>
    </location>
</feature>
<feature type="domain" description="Pyruvate carboxyltransferase" evidence="1">
    <location>
        <begin position="9"/>
        <end position="261"/>
    </location>
</feature>
<feature type="active site" description="Proton acceptor" evidence="1">
    <location>
        <position position="21"/>
    </location>
</feature>
<feature type="binding site" evidence="1">
    <location>
        <begin position="17"/>
        <end position="18"/>
    </location>
    <ligand>
        <name>substrate</name>
    </ligand>
</feature>
<feature type="binding site" evidence="1">
    <location>
        <position position="18"/>
    </location>
    <ligand>
        <name>Mn(2+)</name>
        <dbReference type="ChEBI" id="CHEBI:29035"/>
    </ligand>
</feature>
<feature type="binding site" evidence="1">
    <location>
        <position position="171"/>
    </location>
    <ligand>
        <name>substrate</name>
    </ligand>
</feature>
<feature type="binding site" evidence="1">
    <location>
        <position position="200"/>
    </location>
    <ligand>
        <name>Mn(2+)</name>
        <dbReference type="ChEBI" id="CHEBI:29035"/>
    </ligand>
</feature>
<feature type="binding site" evidence="1">
    <location>
        <position position="200"/>
    </location>
    <ligand>
        <name>substrate</name>
    </ligand>
</feature>
<feature type="binding site" evidence="1">
    <location>
        <position position="202"/>
    </location>
    <ligand>
        <name>Mn(2+)</name>
        <dbReference type="ChEBI" id="CHEBI:29035"/>
    </ligand>
</feature>
<feature type="binding site" evidence="1">
    <location>
        <position position="291"/>
    </location>
    <ligand>
        <name>substrate</name>
    </ligand>
</feature>
<feature type="site" description="Transition state stabilizer" evidence="1">
    <location>
        <position position="17"/>
    </location>
</feature>
<dbReference type="EC" id="4.1.3.39" evidence="1"/>
<dbReference type="EMBL" id="CP000091">
    <property type="protein sequence ID" value="AAZ65166.1"/>
    <property type="molecule type" value="Genomic_DNA"/>
</dbReference>
<dbReference type="SMR" id="Q46NW8"/>
<dbReference type="STRING" id="264198.Reut_B5823"/>
<dbReference type="KEGG" id="reu:Reut_B5823"/>
<dbReference type="eggNOG" id="COG0119">
    <property type="taxonomic scope" value="Bacteria"/>
</dbReference>
<dbReference type="HOGENOM" id="CLU_049173_0_0_4"/>
<dbReference type="OrthoDB" id="9803573at2"/>
<dbReference type="GO" id="GO:0003852">
    <property type="term" value="F:2-isopropylmalate synthase activity"/>
    <property type="evidence" value="ECO:0007669"/>
    <property type="project" value="TreeGrafter"/>
</dbReference>
<dbReference type="GO" id="GO:0008701">
    <property type="term" value="F:4-hydroxy-2-oxovalerate aldolase activity"/>
    <property type="evidence" value="ECO:0007669"/>
    <property type="project" value="UniProtKB-UniRule"/>
</dbReference>
<dbReference type="GO" id="GO:0030145">
    <property type="term" value="F:manganese ion binding"/>
    <property type="evidence" value="ECO:0007669"/>
    <property type="project" value="UniProtKB-UniRule"/>
</dbReference>
<dbReference type="GO" id="GO:0009056">
    <property type="term" value="P:catabolic process"/>
    <property type="evidence" value="ECO:0007669"/>
    <property type="project" value="UniProtKB-KW"/>
</dbReference>
<dbReference type="GO" id="GO:0009098">
    <property type="term" value="P:L-leucine biosynthetic process"/>
    <property type="evidence" value="ECO:0007669"/>
    <property type="project" value="TreeGrafter"/>
</dbReference>
<dbReference type="CDD" id="cd07943">
    <property type="entry name" value="DRE_TIM_HOA"/>
    <property type="match status" value="1"/>
</dbReference>
<dbReference type="FunFam" id="1.10.8.60:FF:000042">
    <property type="entry name" value="4-hydroxy-2-oxovalerate aldolase"/>
    <property type="match status" value="1"/>
</dbReference>
<dbReference type="Gene3D" id="1.10.8.60">
    <property type="match status" value="1"/>
</dbReference>
<dbReference type="Gene3D" id="3.20.20.70">
    <property type="entry name" value="Aldolase class I"/>
    <property type="match status" value="1"/>
</dbReference>
<dbReference type="HAMAP" id="MF_01656">
    <property type="entry name" value="HOA"/>
    <property type="match status" value="1"/>
</dbReference>
<dbReference type="InterPro" id="IPR050073">
    <property type="entry name" value="2-IPM_HCS-like"/>
</dbReference>
<dbReference type="InterPro" id="IPR017629">
    <property type="entry name" value="4OH_2_O-val_aldolase"/>
</dbReference>
<dbReference type="InterPro" id="IPR013785">
    <property type="entry name" value="Aldolase_TIM"/>
</dbReference>
<dbReference type="InterPro" id="IPR012425">
    <property type="entry name" value="DmpG_comm"/>
</dbReference>
<dbReference type="InterPro" id="IPR035685">
    <property type="entry name" value="DRE_TIM_HOA"/>
</dbReference>
<dbReference type="InterPro" id="IPR000891">
    <property type="entry name" value="PYR_CT"/>
</dbReference>
<dbReference type="NCBIfam" id="TIGR03217">
    <property type="entry name" value="4OH_2_O_val_ald"/>
    <property type="match status" value="1"/>
</dbReference>
<dbReference type="NCBIfam" id="NF006049">
    <property type="entry name" value="PRK08195.1"/>
    <property type="match status" value="1"/>
</dbReference>
<dbReference type="PANTHER" id="PTHR10277:SF9">
    <property type="entry name" value="2-ISOPROPYLMALATE SYNTHASE 1, CHLOROPLASTIC-RELATED"/>
    <property type="match status" value="1"/>
</dbReference>
<dbReference type="PANTHER" id="PTHR10277">
    <property type="entry name" value="HOMOCITRATE SYNTHASE-RELATED"/>
    <property type="match status" value="1"/>
</dbReference>
<dbReference type="Pfam" id="PF07836">
    <property type="entry name" value="DmpG_comm"/>
    <property type="match status" value="1"/>
</dbReference>
<dbReference type="Pfam" id="PF00682">
    <property type="entry name" value="HMGL-like"/>
    <property type="match status" value="1"/>
</dbReference>
<dbReference type="SUPFAM" id="SSF51569">
    <property type="entry name" value="Aldolase"/>
    <property type="match status" value="1"/>
</dbReference>
<dbReference type="SUPFAM" id="SSF89000">
    <property type="entry name" value="post-HMGL domain-like"/>
    <property type="match status" value="1"/>
</dbReference>
<dbReference type="PROSITE" id="PS50991">
    <property type="entry name" value="PYR_CT"/>
    <property type="match status" value="1"/>
</dbReference>
<name>HOA_CUPPJ</name>